<proteinExistence type="evidence at transcript level"/>
<feature type="chain" id="PRO_0000100059" description="Dehydrin DHN2">
    <location>
        <begin position="1"/>
        <end position="232"/>
    </location>
</feature>
<feature type="region of interest" description="Disordered" evidence="1">
    <location>
        <begin position="1"/>
        <end position="92"/>
    </location>
</feature>
<feature type="region of interest" description="Disordered" evidence="1">
    <location>
        <begin position="131"/>
        <end position="156"/>
    </location>
</feature>
<feature type="region of interest" description="Disordered" evidence="1">
    <location>
        <begin position="173"/>
        <end position="232"/>
    </location>
</feature>
<feature type="compositionally biased region" description="Polar residues" evidence="1">
    <location>
        <begin position="1"/>
        <end position="12"/>
    </location>
</feature>
<feature type="compositionally biased region" description="Gly residues" evidence="1">
    <location>
        <begin position="73"/>
        <end position="82"/>
    </location>
</feature>
<feature type="compositionally biased region" description="Basic and acidic residues" evidence="1">
    <location>
        <begin position="131"/>
        <end position="140"/>
    </location>
</feature>
<feature type="compositionally biased region" description="Gly residues" evidence="1">
    <location>
        <begin position="143"/>
        <end position="156"/>
    </location>
</feature>
<feature type="compositionally biased region" description="Basic and acidic residues" evidence="1">
    <location>
        <begin position="200"/>
        <end position="223"/>
    </location>
</feature>
<dbReference type="EMBL" id="X63062">
    <property type="protein sequence ID" value="CAA44788.1"/>
    <property type="molecule type" value="mRNA"/>
</dbReference>
<dbReference type="PIR" id="S18138">
    <property type="entry name" value="S18138"/>
</dbReference>
<dbReference type="GO" id="GO:0005829">
    <property type="term" value="C:cytosol"/>
    <property type="evidence" value="ECO:0007669"/>
    <property type="project" value="TreeGrafter"/>
</dbReference>
<dbReference type="GO" id="GO:0009631">
    <property type="term" value="P:cold acclimation"/>
    <property type="evidence" value="ECO:0007669"/>
    <property type="project" value="TreeGrafter"/>
</dbReference>
<dbReference type="GO" id="GO:0009737">
    <property type="term" value="P:response to abscisic acid"/>
    <property type="evidence" value="ECO:0007669"/>
    <property type="project" value="TreeGrafter"/>
</dbReference>
<dbReference type="GO" id="GO:0009414">
    <property type="term" value="P:response to water deprivation"/>
    <property type="evidence" value="ECO:0007669"/>
    <property type="project" value="UniProtKB-ARBA"/>
</dbReference>
<dbReference type="InterPro" id="IPR000167">
    <property type="entry name" value="Dehydrin"/>
</dbReference>
<dbReference type="InterPro" id="IPR030513">
    <property type="entry name" value="Dehydrin_CS"/>
</dbReference>
<dbReference type="PANTHER" id="PTHR33346:SF42">
    <property type="entry name" value="DEHYDRIN XERO 1"/>
    <property type="match status" value="1"/>
</dbReference>
<dbReference type="PANTHER" id="PTHR33346">
    <property type="entry name" value="DEHYDRIN XERO 2-RELATED"/>
    <property type="match status" value="1"/>
</dbReference>
<dbReference type="Pfam" id="PF00257">
    <property type="entry name" value="Dehydrin"/>
    <property type="match status" value="1"/>
</dbReference>
<dbReference type="PROSITE" id="PS00823">
    <property type="entry name" value="DEHYDRIN_2"/>
    <property type="match status" value="2"/>
</dbReference>
<keyword id="KW-0346">Stress response</keyword>
<accession>P28640</accession>
<organism>
    <name type="scientific">Pisum sativum</name>
    <name type="common">Garden pea</name>
    <name type="synonym">Lathyrus oleraceus</name>
    <dbReference type="NCBI Taxonomy" id="3888"/>
    <lineage>
        <taxon>Eukaryota</taxon>
        <taxon>Viridiplantae</taxon>
        <taxon>Streptophyta</taxon>
        <taxon>Embryophyta</taxon>
        <taxon>Tracheophyta</taxon>
        <taxon>Spermatophyta</taxon>
        <taxon>Magnoliopsida</taxon>
        <taxon>eudicotyledons</taxon>
        <taxon>Gunneridae</taxon>
        <taxon>Pentapetalae</taxon>
        <taxon>rosids</taxon>
        <taxon>fabids</taxon>
        <taxon>Fabales</taxon>
        <taxon>Fabaceae</taxon>
        <taxon>Papilionoideae</taxon>
        <taxon>50 kb inversion clade</taxon>
        <taxon>NPAAA clade</taxon>
        <taxon>Hologalegina</taxon>
        <taxon>IRL clade</taxon>
        <taxon>Fabeae</taxon>
        <taxon>Pisum</taxon>
    </lineage>
</organism>
<comment type="induction">
    <text>By abscisic acid (ABA) and water stress.</text>
</comment>
<comment type="similarity">
    <text evidence="2">Belongs to the plant dehydrin family.</text>
</comment>
<reference key="1">
    <citation type="submission" date="1991-11" db="EMBL/GenBank/DDBJ databases">
        <authorList>
            <person name="Robertson M."/>
            <person name="Chandler P.M."/>
        </authorList>
    </citation>
    <scope>NUCLEOTIDE SEQUENCE [MRNA]</scope>
    <source>
        <strain>cv. Greenfeast</strain>
    </source>
</reference>
<name>DHN2_PEA</name>
<protein>
    <recommendedName>
        <fullName>Dehydrin DHN2</fullName>
    </recommendedName>
</protein>
<gene>
    <name type="primary">DHN2</name>
</gene>
<sequence length="232" mass="24490">MSQYQNQYGAQTRKTDEYGNPMNQVDQYGNPISGGGGLTGEAGRQHYGTTGGATDHGHGQQHRGVDQTTGYGTHTGGVGGYGTKPEYGSTNTGSGYGTGTGYGGSGTTEYVREEHHGDKKGVMDKIKEKIPGTEQSRTHTDGTGYGSTGYGASGGGIGNTGQEYVREELTVHPGDKKHGSAGQEYVKEERRGIGNTGQEYVREEHRVDHGEKKGIMDKIKEKLPGTGGCTGH</sequence>
<evidence type="ECO:0000256" key="1">
    <source>
        <dbReference type="SAM" id="MobiDB-lite"/>
    </source>
</evidence>
<evidence type="ECO:0000305" key="2"/>